<sequence>MKTINENAPQVSSWQTYRRLLAFAKPYRLLLVAALIAALIEAAGTTGFLALMKPITDETFIYKNAEVSRWLPVQIILLFVIRGAAGYITDMAMGKSARSIARDLRVKVMSKYLRLPGSRFDSEPVPSMLIRLGSDSDQVAQAAVDAVKVMIQQSLQVIGALALMLWHSWQVTLTILVLAPVLAWVMDKVARRYRRISHSIQESGAHLLQAADQTLSSHQEVKIYGAQQSEMERYSGLADRNLRLAMKVESTRGISTATVQMIGAIGLSALLFVAGAQALAGRLTAGDFVVLMTSMLTIIPGLKQLTNVQNMVQRGLASAERLFSVLDSPDEPDQGQVPLTRAKGLIEFRDVTARYPGQANPALADVSFVAQPGTVTAIVGRSGSGKSSLIKLIPRFYEAESGQILLDGHPVQAYALADLRRQIALVGQQVMLFDGSIAENVAYGEMRQCDAGQLERAIQGANAMEFVAQLPEGLQSHVGTKGGRLSGGQRQRLAIARAMLKDAPILILDEATAALDNESERLVQDALHKLMPDRTTLVIAHRLSTIEHADQVLVMDQGRIVERGTHQELLALGGLYSHLHGMQFRERQA</sequence>
<name>MSBA_XANCP</name>
<comment type="function">
    <text evidence="1">Involved in lipopolysaccharide (LPS) biosynthesis. Translocates lipid A-core from the inner to the outer leaflet of the inner membrane. Transmembrane domains (TMD) form a pore in the inner membrane and the ATP-binding domain (NBD) is responsible for energy generation.</text>
</comment>
<comment type="catalytic activity">
    <reaction evidence="1">
        <text>ATP + H2O + lipid A-core oligosaccharideSide 1 = ADP + phosphate + lipid A-core oligosaccharideSide 2.</text>
        <dbReference type="EC" id="7.5.2.6"/>
    </reaction>
</comment>
<comment type="subunit">
    <text evidence="1">Homodimer.</text>
</comment>
<comment type="subcellular location">
    <subcellularLocation>
        <location evidence="1">Cell inner membrane</location>
        <topology evidence="1">Multi-pass membrane protein</topology>
    </subcellularLocation>
</comment>
<comment type="domain">
    <text evidence="1">In MsbA the ATP-binding domain (NBD) and the transmembrane domain (TMD) are fused.</text>
</comment>
<comment type="similarity">
    <text evidence="1">Belongs to the ABC transporter superfamily. Lipid exporter (TC 3.A.1.106) family.</text>
</comment>
<protein>
    <recommendedName>
        <fullName evidence="1">ATP-dependent lipid A-core flippase</fullName>
        <ecNumber evidence="1">7.5.2.6</ecNumber>
    </recommendedName>
    <alternativeName>
        <fullName evidence="1">Lipid A export ATP-binding/permease protein MsbA</fullName>
    </alternativeName>
</protein>
<proteinExistence type="inferred from homology"/>
<dbReference type="EC" id="7.5.2.6" evidence="1"/>
<dbReference type="EMBL" id="AE008922">
    <property type="protein sequence ID" value="AAM41405.1"/>
    <property type="molecule type" value="Genomic_DNA"/>
</dbReference>
<dbReference type="RefSeq" id="NP_637481.1">
    <property type="nucleotide sequence ID" value="NC_003902.1"/>
</dbReference>
<dbReference type="RefSeq" id="WP_011037271.1">
    <property type="nucleotide sequence ID" value="NC_003902.1"/>
</dbReference>
<dbReference type="SMR" id="Q8P8W4"/>
<dbReference type="STRING" id="190485.XCC2120"/>
<dbReference type="EnsemblBacteria" id="AAM41405">
    <property type="protein sequence ID" value="AAM41405"/>
    <property type="gene ID" value="XCC2120"/>
</dbReference>
<dbReference type="KEGG" id="xcc:XCC2120"/>
<dbReference type="PATRIC" id="fig|190485.4.peg.2270"/>
<dbReference type="eggNOG" id="COG1132">
    <property type="taxonomic scope" value="Bacteria"/>
</dbReference>
<dbReference type="HOGENOM" id="CLU_000604_84_7_6"/>
<dbReference type="OrthoDB" id="9806127at2"/>
<dbReference type="Proteomes" id="UP000001010">
    <property type="component" value="Chromosome"/>
</dbReference>
<dbReference type="GO" id="GO:0005886">
    <property type="term" value="C:plasma membrane"/>
    <property type="evidence" value="ECO:0007669"/>
    <property type="project" value="UniProtKB-SubCell"/>
</dbReference>
<dbReference type="GO" id="GO:0140359">
    <property type="term" value="F:ABC-type transporter activity"/>
    <property type="evidence" value="ECO:0007669"/>
    <property type="project" value="InterPro"/>
</dbReference>
<dbReference type="GO" id="GO:0005524">
    <property type="term" value="F:ATP binding"/>
    <property type="evidence" value="ECO:0007669"/>
    <property type="project" value="UniProtKB-KW"/>
</dbReference>
<dbReference type="GO" id="GO:0016887">
    <property type="term" value="F:ATP hydrolysis activity"/>
    <property type="evidence" value="ECO:0007669"/>
    <property type="project" value="InterPro"/>
</dbReference>
<dbReference type="GO" id="GO:0034040">
    <property type="term" value="F:ATPase-coupled lipid transmembrane transporter activity"/>
    <property type="evidence" value="ECO:0000318"/>
    <property type="project" value="GO_Central"/>
</dbReference>
<dbReference type="GO" id="GO:0055085">
    <property type="term" value="P:transmembrane transport"/>
    <property type="evidence" value="ECO:0000318"/>
    <property type="project" value="GO_Central"/>
</dbReference>
<dbReference type="CDD" id="cd18552">
    <property type="entry name" value="ABC_6TM_MsbA_like"/>
    <property type="match status" value="1"/>
</dbReference>
<dbReference type="FunFam" id="3.40.50.300:FF:000140">
    <property type="entry name" value="Lipid A export ATP-binding/permease protein MsbA"/>
    <property type="match status" value="1"/>
</dbReference>
<dbReference type="Gene3D" id="1.20.1560.10">
    <property type="entry name" value="ABC transporter type 1, transmembrane domain"/>
    <property type="match status" value="1"/>
</dbReference>
<dbReference type="Gene3D" id="3.40.50.300">
    <property type="entry name" value="P-loop containing nucleotide triphosphate hydrolases"/>
    <property type="match status" value="1"/>
</dbReference>
<dbReference type="InterPro" id="IPR003593">
    <property type="entry name" value="AAA+_ATPase"/>
</dbReference>
<dbReference type="InterPro" id="IPR011527">
    <property type="entry name" value="ABC1_TM_dom"/>
</dbReference>
<dbReference type="InterPro" id="IPR036640">
    <property type="entry name" value="ABC1_TM_sf"/>
</dbReference>
<dbReference type="InterPro" id="IPR003439">
    <property type="entry name" value="ABC_transporter-like_ATP-bd"/>
</dbReference>
<dbReference type="InterPro" id="IPR017871">
    <property type="entry name" value="ABC_transporter-like_CS"/>
</dbReference>
<dbReference type="InterPro" id="IPR011917">
    <property type="entry name" value="ABC_transpr_lipidA"/>
</dbReference>
<dbReference type="InterPro" id="IPR027417">
    <property type="entry name" value="P-loop_NTPase"/>
</dbReference>
<dbReference type="InterPro" id="IPR039421">
    <property type="entry name" value="Type_1_exporter"/>
</dbReference>
<dbReference type="NCBIfam" id="TIGR02203">
    <property type="entry name" value="MsbA_lipidA"/>
    <property type="match status" value="1"/>
</dbReference>
<dbReference type="PANTHER" id="PTHR43394:SF1">
    <property type="entry name" value="ATP-BINDING CASSETTE SUB-FAMILY B MEMBER 10, MITOCHONDRIAL"/>
    <property type="match status" value="1"/>
</dbReference>
<dbReference type="PANTHER" id="PTHR43394">
    <property type="entry name" value="ATP-DEPENDENT PERMEASE MDL1, MITOCHONDRIAL"/>
    <property type="match status" value="1"/>
</dbReference>
<dbReference type="Pfam" id="PF00664">
    <property type="entry name" value="ABC_membrane"/>
    <property type="match status" value="1"/>
</dbReference>
<dbReference type="Pfam" id="PF00005">
    <property type="entry name" value="ABC_tran"/>
    <property type="match status" value="1"/>
</dbReference>
<dbReference type="SMART" id="SM00382">
    <property type="entry name" value="AAA"/>
    <property type="match status" value="1"/>
</dbReference>
<dbReference type="SUPFAM" id="SSF90123">
    <property type="entry name" value="ABC transporter transmembrane region"/>
    <property type="match status" value="1"/>
</dbReference>
<dbReference type="SUPFAM" id="SSF52540">
    <property type="entry name" value="P-loop containing nucleoside triphosphate hydrolases"/>
    <property type="match status" value="1"/>
</dbReference>
<dbReference type="PROSITE" id="PS50929">
    <property type="entry name" value="ABC_TM1F"/>
    <property type="match status" value="1"/>
</dbReference>
<dbReference type="PROSITE" id="PS00211">
    <property type="entry name" value="ABC_TRANSPORTER_1"/>
    <property type="match status" value="1"/>
</dbReference>
<dbReference type="PROSITE" id="PS50893">
    <property type="entry name" value="ABC_TRANSPORTER_2"/>
    <property type="match status" value="1"/>
</dbReference>
<dbReference type="PROSITE" id="PS51239">
    <property type="entry name" value="MSBA"/>
    <property type="match status" value="1"/>
</dbReference>
<evidence type="ECO:0000255" key="1">
    <source>
        <dbReference type="HAMAP-Rule" id="MF_01703"/>
    </source>
</evidence>
<keyword id="KW-0067">ATP-binding</keyword>
<keyword id="KW-0997">Cell inner membrane</keyword>
<keyword id="KW-1003">Cell membrane</keyword>
<keyword id="KW-0445">Lipid transport</keyword>
<keyword id="KW-0472">Membrane</keyword>
<keyword id="KW-0547">Nucleotide-binding</keyword>
<keyword id="KW-1185">Reference proteome</keyword>
<keyword id="KW-1278">Translocase</keyword>
<keyword id="KW-0812">Transmembrane</keyword>
<keyword id="KW-1133">Transmembrane helix</keyword>
<keyword id="KW-0813">Transport</keyword>
<reference key="1">
    <citation type="journal article" date="2002" name="Nature">
        <title>Comparison of the genomes of two Xanthomonas pathogens with differing host specificities.</title>
        <authorList>
            <person name="da Silva A.C.R."/>
            <person name="Ferro J.A."/>
            <person name="Reinach F.C."/>
            <person name="Farah C.S."/>
            <person name="Furlan L.R."/>
            <person name="Quaggio R.B."/>
            <person name="Monteiro-Vitorello C.B."/>
            <person name="Van Sluys M.A."/>
            <person name="Almeida N.F. Jr."/>
            <person name="Alves L.M.C."/>
            <person name="do Amaral A.M."/>
            <person name="Bertolini M.C."/>
            <person name="Camargo L.E.A."/>
            <person name="Camarotte G."/>
            <person name="Cannavan F."/>
            <person name="Cardozo J."/>
            <person name="Chambergo F."/>
            <person name="Ciapina L.P."/>
            <person name="Cicarelli R.M.B."/>
            <person name="Coutinho L.L."/>
            <person name="Cursino-Santos J.R."/>
            <person name="El-Dorry H."/>
            <person name="Faria J.B."/>
            <person name="Ferreira A.J.S."/>
            <person name="Ferreira R.C.C."/>
            <person name="Ferro M.I.T."/>
            <person name="Formighieri E.F."/>
            <person name="Franco M.C."/>
            <person name="Greggio C.C."/>
            <person name="Gruber A."/>
            <person name="Katsuyama A.M."/>
            <person name="Kishi L.T."/>
            <person name="Leite R.P."/>
            <person name="Lemos E.G.M."/>
            <person name="Lemos M.V.F."/>
            <person name="Locali E.C."/>
            <person name="Machado M.A."/>
            <person name="Madeira A.M.B.N."/>
            <person name="Martinez-Rossi N.M."/>
            <person name="Martins E.C."/>
            <person name="Meidanis J."/>
            <person name="Menck C.F.M."/>
            <person name="Miyaki C.Y."/>
            <person name="Moon D.H."/>
            <person name="Moreira L.M."/>
            <person name="Novo M.T.M."/>
            <person name="Okura V.K."/>
            <person name="Oliveira M.C."/>
            <person name="Oliveira V.R."/>
            <person name="Pereira H.A."/>
            <person name="Rossi A."/>
            <person name="Sena J.A.D."/>
            <person name="Silva C."/>
            <person name="de Souza R.F."/>
            <person name="Spinola L.A.F."/>
            <person name="Takita M.A."/>
            <person name="Tamura R.E."/>
            <person name="Teixeira E.C."/>
            <person name="Tezza R.I.D."/>
            <person name="Trindade dos Santos M."/>
            <person name="Truffi D."/>
            <person name="Tsai S.M."/>
            <person name="White F.F."/>
            <person name="Setubal J.C."/>
            <person name="Kitajima J.P."/>
        </authorList>
    </citation>
    <scope>NUCLEOTIDE SEQUENCE [LARGE SCALE GENOMIC DNA]</scope>
    <source>
        <strain>ATCC 33913 / DSM 3586 / NCPPB 528 / LMG 568 / P 25</strain>
    </source>
</reference>
<organism>
    <name type="scientific">Xanthomonas campestris pv. campestris (strain ATCC 33913 / DSM 3586 / NCPPB 528 / LMG 568 / P 25)</name>
    <dbReference type="NCBI Taxonomy" id="190485"/>
    <lineage>
        <taxon>Bacteria</taxon>
        <taxon>Pseudomonadati</taxon>
        <taxon>Pseudomonadota</taxon>
        <taxon>Gammaproteobacteria</taxon>
        <taxon>Lysobacterales</taxon>
        <taxon>Lysobacteraceae</taxon>
        <taxon>Xanthomonas</taxon>
    </lineage>
</organism>
<accession>Q8P8W4</accession>
<gene>
    <name evidence="1" type="primary">msbA</name>
    <name type="ordered locus">XCC2120</name>
</gene>
<feature type="chain" id="PRO_0000092607" description="ATP-dependent lipid A-core flippase">
    <location>
        <begin position="1"/>
        <end position="589"/>
    </location>
</feature>
<feature type="transmembrane region" description="Helical" evidence="1">
    <location>
        <begin position="29"/>
        <end position="49"/>
    </location>
</feature>
<feature type="transmembrane region" description="Helical" evidence="1">
    <location>
        <begin position="70"/>
        <end position="90"/>
    </location>
</feature>
<feature type="transmembrane region" description="Helical" evidence="1">
    <location>
        <begin position="157"/>
        <end position="177"/>
    </location>
</feature>
<feature type="transmembrane region" description="Helical" evidence="1">
    <location>
        <begin position="261"/>
        <end position="281"/>
    </location>
</feature>
<feature type="transmembrane region" description="Helical" evidence="1">
    <location>
        <begin position="283"/>
        <end position="303"/>
    </location>
</feature>
<feature type="domain" description="ABC transmembrane type-1" evidence="1">
    <location>
        <begin position="32"/>
        <end position="314"/>
    </location>
</feature>
<feature type="domain" description="ABC transporter" evidence="1">
    <location>
        <begin position="346"/>
        <end position="582"/>
    </location>
</feature>
<feature type="binding site" evidence="1">
    <location>
        <begin position="380"/>
        <end position="387"/>
    </location>
    <ligand>
        <name>ATP</name>
        <dbReference type="ChEBI" id="CHEBI:30616"/>
    </ligand>
</feature>